<proteinExistence type="inferred from homology"/>
<protein>
    <recommendedName>
        <fullName>UPF0056 membrane protein YhcE</fullName>
    </recommendedName>
</protein>
<sequence>MIQTFFDFPVYFKFFIGLFALVNPVGIIPVFISMTSYQTAAARNKTNLTANLSVAIILWISLFLGDTILQLFGISIDSFRIAGGILVVTIAMSMISGKLGEDKQNKQEKSETAVRESIGVVPLALPLMAGPGAISSTIVWGTRYHSISYLFGFFVAIALFALCCWGLFRMAPWLVRVLRQTGINVITRIMGLLLMALGIEFIVTGIKGIFPGLLN</sequence>
<feature type="chain" id="PRO_0000156901" description="UPF0056 membrane protein YhcE">
    <location>
        <begin position="1"/>
        <end position="215"/>
    </location>
</feature>
<feature type="transmembrane region" description="Helical" evidence="1">
    <location>
        <begin position="14"/>
        <end position="34"/>
    </location>
</feature>
<feature type="transmembrane region" description="Helical" evidence="1">
    <location>
        <begin position="54"/>
        <end position="74"/>
    </location>
</feature>
<feature type="transmembrane region" description="Helical" evidence="1">
    <location>
        <begin position="81"/>
        <end position="101"/>
    </location>
</feature>
<feature type="transmembrane region" description="Helical" evidence="1">
    <location>
        <begin position="120"/>
        <end position="140"/>
    </location>
</feature>
<feature type="transmembrane region" description="Helical" evidence="1">
    <location>
        <begin position="147"/>
        <end position="167"/>
    </location>
</feature>
<feature type="transmembrane region" description="Helical" evidence="1">
    <location>
        <begin position="189"/>
        <end position="209"/>
    </location>
</feature>
<accession>P25743</accession>
<accession>P76025</accession>
<accession>Q9R7N0</accession>
<dbReference type="EMBL" id="X59501">
    <property type="protein sequence ID" value="CAA42090.1"/>
    <property type="molecule type" value="Genomic_DNA"/>
</dbReference>
<dbReference type="EMBL" id="U00096">
    <property type="protein sequence ID" value="AAC74324.1"/>
    <property type="molecule type" value="Genomic_DNA"/>
</dbReference>
<dbReference type="EMBL" id="AP009048">
    <property type="protein sequence ID" value="BAA36122.2"/>
    <property type="molecule type" value="Genomic_DNA"/>
</dbReference>
<dbReference type="PIR" id="E64871">
    <property type="entry name" value="E64871"/>
</dbReference>
<dbReference type="RefSeq" id="NP_415758.1">
    <property type="nucleotide sequence ID" value="NC_000913.3"/>
</dbReference>
<dbReference type="RefSeq" id="WP_000616554.1">
    <property type="nucleotide sequence ID" value="NZ_SSZK01000031.1"/>
</dbReference>
<dbReference type="BioGRID" id="4263225">
    <property type="interactions" value="10"/>
</dbReference>
<dbReference type="FunCoup" id="P25743">
    <property type="interactions" value="157"/>
</dbReference>
<dbReference type="STRING" id="511145.b1242"/>
<dbReference type="TCDB" id="2.A.95.1.7">
    <property type="family name" value="the 6 tms neutral amino acid transporter (naat) family"/>
</dbReference>
<dbReference type="PaxDb" id="511145-b1242"/>
<dbReference type="EnsemblBacteria" id="AAC74324">
    <property type="protein sequence ID" value="AAC74324"/>
    <property type="gene ID" value="b1242"/>
</dbReference>
<dbReference type="GeneID" id="945836"/>
<dbReference type="KEGG" id="ecj:JW1229"/>
<dbReference type="KEGG" id="eco:b1242"/>
<dbReference type="KEGG" id="ecoc:C3026_07300"/>
<dbReference type="PATRIC" id="fig|1411691.4.peg.1042"/>
<dbReference type="EchoBASE" id="EB1318"/>
<dbReference type="eggNOG" id="COG2095">
    <property type="taxonomic scope" value="Bacteria"/>
</dbReference>
<dbReference type="HOGENOM" id="CLU_079909_2_1_6"/>
<dbReference type="InParanoid" id="P25743"/>
<dbReference type="OMA" id="IMDPPGI"/>
<dbReference type="OrthoDB" id="21094at2"/>
<dbReference type="PhylomeDB" id="P25743"/>
<dbReference type="BioCyc" id="EcoCyc:EG11342-MONOMER"/>
<dbReference type="PRO" id="PR:P25743"/>
<dbReference type="Proteomes" id="UP000000625">
    <property type="component" value="Chromosome"/>
</dbReference>
<dbReference type="GO" id="GO:0005886">
    <property type="term" value="C:plasma membrane"/>
    <property type="evidence" value="ECO:0000314"/>
    <property type="project" value="EcoCyc"/>
</dbReference>
<dbReference type="InterPro" id="IPR002771">
    <property type="entry name" value="Multi_antbiot-R_MarC"/>
</dbReference>
<dbReference type="NCBIfam" id="TIGR00427">
    <property type="entry name" value="NAAT family transporter"/>
    <property type="match status" value="1"/>
</dbReference>
<dbReference type="NCBIfam" id="NF008320">
    <property type="entry name" value="PRK11111.1"/>
    <property type="match status" value="1"/>
</dbReference>
<dbReference type="PANTHER" id="PTHR33508">
    <property type="entry name" value="UPF0056 MEMBRANE PROTEIN YHCE"/>
    <property type="match status" value="1"/>
</dbReference>
<dbReference type="PANTHER" id="PTHR33508:SF1">
    <property type="entry name" value="UPF0056 MEMBRANE PROTEIN YHCE"/>
    <property type="match status" value="1"/>
</dbReference>
<dbReference type="Pfam" id="PF01914">
    <property type="entry name" value="MarC"/>
    <property type="match status" value="1"/>
</dbReference>
<gene>
    <name type="primary">ychE</name>
    <name type="ordered locus">b1242</name>
    <name type="ordered locus">JW1229</name>
</gene>
<reference key="1">
    <citation type="journal article" date="1991" name="FEBS Lett.">
        <title>Pyruvate-formate-lyase-deactivase and acetyl-CoA reductase activities of Escherichia coli reside on a polymeric protein particle encoded by adhE.</title>
        <authorList>
            <person name="Kessler D."/>
            <person name="Leibrecht I."/>
            <person name="Knappe J."/>
        </authorList>
    </citation>
    <scope>NUCLEOTIDE SEQUENCE [GENOMIC DNA]</scope>
    <source>
        <strain>K12</strain>
    </source>
</reference>
<reference key="2">
    <citation type="journal article" date="1996" name="DNA Res.">
        <title>A 570-kb DNA sequence of the Escherichia coli K-12 genome corresponding to the 28.0-40.1 min region on the linkage map.</title>
        <authorList>
            <person name="Aiba H."/>
            <person name="Baba T."/>
            <person name="Fujita K."/>
            <person name="Hayashi K."/>
            <person name="Inada T."/>
            <person name="Isono K."/>
            <person name="Itoh T."/>
            <person name="Kasai H."/>
            <person name="Kashimoto K."/>
            <person name="Kimura S."/>
            <person name="Kitakawa M."/>
            <person name="Kitagawa M."/>
            <person name="Makino K."/>
            <person name="Miki T."/>
            <person name="Mizobuchi K."/>
            <person name="Mori H."/>
            <person name="Mori T."/>
            <person name="Motomura K."/>
            <person name="Nakade S."/>
            <person name="Nakamura Y."/>
            <person name="Nashimoto H."/>
            <person name="Nishio Y."/>
            <person name="Oshima T."/>
            <person name="Saito N."/>
            <person name="Sampei G."/>
            <person name="Seki Y."/>
            <person name="Sivasundaram S."/>
            <person name="Tagami H."/>
            <person name="Takeda J."/>
            <person name="Takemoto K."/>
            <person name="Takeuchi Y."/>
            <person name="Wada C."/>
            <person name="Yamamoto Y."/>
            <person name="Horiuchi T."/>
        </authorList>
    </citation>
    <scope>NUCLEOTIDE SEQUENCE [LARGE SCALE GENOMIC DNA]</scope>
    <source>
        <strain>K12 / W3110 / ATCC 27325 / DSM 5911</strain>
    </source>
</reference>
<reference key="3">
    <citation type="journal article" date="1997" name="Science">
        <title>The complete genome sequence of Escherichia coli K-12.</title>
        <authorList>
            <person name="Blattner F.R."/>
            <person name="Plunkett G. III"/>
            <person name="Bloch C.A."/>
            <person name="Perna N.T."/>
            <person name="Burland V."/>
            <person name="Riley M."/>
            <person name="Collado-Vides J."/>
            <person name="Glasner J.D."/>
            <person name="Rode C.K."/>
            <person name="Mayhew G.F."/>
            <person name="Gregor J."/>
            <person name="Davis N.W."/>
            <person name="Kirkpatrick H.A."/>
            <person name="Goeden M.A."/>
            <person name="Rose D.J."/>
            <person name="Mau B."/>
            <person name="Shao Y."/>
        </authorList>
    </citation>
    <scope>NUCLEOTIDE SEQUENCE [LARGE SCALE GENOMIC DNA]</scope>
    <source>
        <strain>K12 / MG1655 / ATCC 47076</strain>
    </source>
</reference>
<reference key="4">
    <citation type="journal article" date="2006" name="Mol. Syst. Biol.">
        <title>Highly accurate genome sequences of Escherichia coli K-12 strains MG1655 and W3110.</title>
        <authorList>
            <person name="Hayashi K."/>
            <person name="Morooka N."/>
            <person name="Yamamoto Y."/>
            <person name="Fujita K."/>
            <person name="Isono K."/>
            <person name="Choi S."/>
            <person name="Ohtsubo E."/>
            <person name="Baba T."/>
            <person name="Wanner B.L."/>
            <person name="Mori H."/>
            <person name="Horiuchi T."/>
        </authorList>
    </citation>
    <scope>NUCLEOTIDE SEQUENCE [LARGE SCALE GENOMIC DNA]</scope>
    <source>
        <strain>K12 / W3110 / ATCC 27325 / DSM 5911</strain>
    </source>
</reference>
<comment type="subcellular location">
    <subcellularLocation>
        <location evidence="2">Cell membrane</location>
        <topology evidence="2">Multi-pass membrane protein</topology>
    </subcellularLocation>
</comment>
<comment type="similarity">
    <text evidence="2">Belongs to the UPF0056 (MarC) family.</text>
</comment>
<name>YCHE_ECOLI</name>
<organism>
    <name type="scientific">Escherichia coli (strain K12)</name>
    <dbReference type="NCBI Taxonomy" id="83333"/>
    <lineage>
        <taxon>Bacteria</taxon>
        <taxon>Pseudomonadati</taxon>
        <taxon>Pseudomonadota</taxon>
        <taxon>Gammaproteobacteria</taxon>
        <taxon>Enterobacterales</taxon>
        <taxon>Enterobacteriaceae</taxon>
        <taxon>Escherichia</taxon>
    </lineage>
</organism>
<evidence type="ECO:0000255" key="1"/>
<evidence type="ECO:0000305" key="2"/>
<keyword id="KW-1003">Cell membrane</keyword>
<keyword id="KW-0472">Membrane</keyword>
<keyword id="KW-1185">Reference proteome</keyword>
<keyword id="KW-0812">Transmembrane</keyword>
<keyword id="KW-1133">Transmembrane helix</keyword>